<protein>
    <recommendedName>
        <fullName>Ribosome biogenesis protein NSA2</fullName>
    </recommendedName>
</protein>
<proteinExistence type="inferred from homology"/>
<gene>
    <name type="primary">NSA2</name>
    <name type="ORF">CIMG_07586</name>
</gene>
<comment type="function">
    <text evidence="1">Involved in the biogenesis of the 60S ribosomal subunit. May play a part in the quality control of pre-60S particles (By similarity).</text>
</comment>
<comment type="subunit">
    <text evidence="2">Component of the pre-66S ribosomal particle. Interacts with NOP7 and RRP1. Interacts with RSA4 (via WD repeats).</text>
</comment>
<comment type="subcellular location">
    <subcellularLocation>
        <location evidence="1">Nucleus</location>
        <location evidence="1">Nucleolus</location>
    </subcellularLocation>
</comment>
<comment type="similarity">
    <text evidence="5">Belongs to the eukaryotic ribosomal protein eS8 family. Ribosome biogenesis protein NSA2 subfamily.</text>
</comment>
<keyword id="KW-0539">Nucleus</keyword>
<keyword id="KW-1185">Reference proteome</keyword>
<keyword id="KW-0687">Ribonucleoprotein</keyword>
<keyword id="KW-0690">Ribosome biogenesis</keyword>
<keyword id="KW-0698">rRNA processing</keyword>
<sequence length="261" mass="29835">MPQNEYIERWQKQHGKRLDHEERTRKRIARESHKQSQDAQTLRGLRAKLYHKKRHAEKIQMRKRIKAQEERDVKSAAPNEPSTTPLPQYLLDRSQATNAKALSSAIKEKRAEKAAKFSVPLPKVKGISEEEMFKVVKTGKKTSKKSWKRMITKPTFVGNDFTRRPVKYERFIRPMGLRYKKANVTHPELGVTVQLPIISVKKNPQSPMYTQLGVLTKGTIIEVNVSELGLVTAGGKVVWGKWAQITNNCENDGCVNAVLLV</sequence>
<organism>
    <name type="scientific">Coccidioides immitis (strain RS)</name>
    <name type="common">Valley fever fungus</name>
    <dbReference type="NCBI Taxonomy" id="246410"/>
    <lineage>
        <taxon>Eukaryota</taxon>
        <taxon>Fungi</taxon>
        <taxon>Dikarya</taxon>
        <taxon>Ascomycota</taxon>
        <taxon>Pezizomycotina</taxon>
        <taxon>Eurotiomycetes</taxon>
        <taxon>Eurotiomycetidae</taxon>
        <taxon>Onygenales</taxon>
        <taxon>Onygenaceae</taxon>
        <taxon>Coccidioides</taxon>
    </lineage>
</organism>
<reference key="1">
    <citation type="journal article" date="2009" name="Genome Res.">
        <title>Comparative genomic analyses of the human fungal pathogens Coccidioides and their relatives.</title>
        <authorList>
            <person name="Sharpton T.J."/>
            <person name="Stajich J.E."/>
            <person name="Rounsley S.D."/>
            <person name="Gardner M.J."/>
            <person name="Wortman J.R."/>
            <person name="Jordar V.S."/>
            <person name="Maiti R."/>
            <person name="Kodira C.D."/>
            <person name="Neafsey D.E."/>
            <person name="Zeng Q."/>
            <person name="Hung C.-Y."/>
            <person name="McMahan C."/>
            <person name="Muszewska A."/>
            <person name="Grynberg M."/>
            <person name="Mandel M.A."/>
            <person name="Kellner E.M."/>
            <person name="Barker B.M."/>
            <person name="Galgiani J.N."/>
            <person name="Orbach M.J."/>
            <person name="Kirkland T.N."/>
            <person name="Cole G.T."/>
            <person name="Henn M.R."/>
            <person name="Birren B.W."/>
            <person name="Taylor J.W."/>
        </authorList>
    </citation>
    <scope>NUCLEOTIDE SEQUENCE [LARGE SCALE GENOMIC DNA]</scope>
    <source>
        <strain>RS</strain>
    </source>
</reference>
<reference key="2">
    <citation type="journal article" date="2010" name="Genome Res.">
        <title>Population genomic sequencing of Coccidioides fungi reveals recent hybridization and transposon control.</title>
        <authorList>
            <person name="Neafsey D.E."/>
            <person name="Barker B.M."/>
            <person name="Sharpton T.J."/>
            <person name="Stajich J.E."/>
            <person name="Park D.J."/>
            <person name="Whiston E."/>
            <person name="Hung C.-Y."/>
            <person name="McMahan C."/>
            <person name="White J."/>
            <person name="Sykes S."/>
            <person name="Heiman D."/>
            <person name="Young S."/>
            <person name="Zeng Q."/>
            <person name="Abouelleil A."/>
            <person name="Aftuck L."/>
            <person name="Bessette D."/>
            <person name="Brown A."/>
            <person name="FitzGerald M."/>
            <person name="Lui A."/>
            <person name="Macdonald J.P."/>
            <person name="Priest M."/>
            <person name="Orbach M.J."/>
            <person name="Galgiani J.N."/>
            <person name="Kirkland T.N."/>
            <person name="Cole G.T."/>
            <person name="Birren B.W."/>
            <person name="Henn M.R."/>
            <person name="Taylor J.W."/>
            <person name="Rounsley S.D."/>
        </authorList>
    </citation>
    <scope>GENOME REANNOTATION</scope>
    <source>
        <strain>RS</strain>
    </source>
</reference>
<accession>Q1DQ27</accession>
<accession>A0A0D6K9M8</accession>
<accession>J3K4C2</accession>
<name>NSA2_COCIM</name>
<feature type="chain" id="PRO_0000320414" description="Ribosome biogenesis protein NSA2">
    <location>
        <begin position="1"/>
        <end position="261"/>
    </location>
</feature>
<feature type="region of interest" description="Disordered" evidence="4">
    <location>
        <begin position="1"/>
        <end position="87"/>
    </location>
</feature>
<feature type="short sequence motif" description="Nuclear localization signal 1" evidence="3">
    <location>
        <begin position="15"/>
        <end position="22"/>
    </location>
</feature>
<feature type="short sequence motif" description="Nuclear localization signal 2" evidence="3">
    <location>
        <begin position="51"/>
        <end position="58"/>
    </location>
</feature>
<feature type="compositionally biased region" description="Basic and acidic residues" evidence="4">
    <location>
        <begin position="1"/>
        <end position="36"/>
    </location>
</feature>
<feature type="compositionally biased region" description="Basic residues" evidence="4">
    <location>
        <begin position="45"/>
        <end position="65"/>
    </location>
</feature>
<dbReference type="EMBL" id="GG704913">
    <property type="protein sequence ID" value="EAS28840.2"/>
    <property type="molecule type" value="Genomic_DNA"/>
</dbReference>
<dbReference type="RefSeq" id="XP_001240423.2">
    <property type="nucleotide sequence ID" value="XM_001240422.2"/>
</dbReference>
<dbReference type="SMR" id="Q1DQ27"/>
<dbReference type="FunCoup" id="Q1DQ27">
    <property type="interactions" value="1147"/>
</dbReference>
<dbReference type="STRING" id="246410.Q1DQ27"/>
<dbReference type="GeneID" id="4560082"/>
<dbReference type="KEGG" id="cim:CIMG_07586"/>
<dbReference type="VEuPathDB" id="FungiDB:CIMG_07586"/>
<dbReference type="InParanoid" id="Q1DQ27"/>
<dbReference type="OMA" id="TNTPEND"/>
<dbReference type="OrthoDB" id="1847590at2759"/>
<dbReference type="Proteomes" id="UP000001261">
    <property type="component" value="Unassembled WGS sequence"/>
</dbReference>
<dbReference type="GO" id="GO:0005730">
    <property type="term" value="C:nucleolus"/>
    <property type="evidence" value="ECO:0007669"/>
    <property type="project" value="UniProtKB-SubCell"/>
</dbReference>
<dbReference type="GO" id="GO:1990904">
    <property type="term" value="C:ribonucleoprotein complex"/>
    <property type="evidence" value="ECO:0007669"/>
    <property type="project" value="UniProtKB-KW"/>
</dbReference>
<dbReference type="GO" id="GO:0006364">
    <property type="term" value="P:rRNA processing"/>
    <property type="evidence" value="ECO:0007669"/>
    <property type="project" value="UniProtKB-KW"/>
</dbReference>
<dbReference type="CDD" id="cd11381">
    <property type="entry name" value="NSA2"/>
    <property type="match status" value="1"/>
</dbReference>
<dbReference type="FunFam" id="2.40.10.310:FF:000001">
    <property type="entry name" value="NSA2, ribosome biogenesis homolog"/>
    <property type="match status" value="1"/>
</dbReference>
<dbReference type="Gene3D" id="2.40.10.310">
    <property type="match status" value="1"/>
</dbReference>
<dbReference type="InterPro" id="IPR039411">
    <property type="entry name" value="NSA2_fam"/>
</dbReference>
<dbReference type="InterPro" id="IPR022309">
    <property type="entry name" value="Ribosomal_Se8/biogenesis_NSA2"/>
</dbReference>
<dbReference type="PANTHER" id="PTHR12642">
    <property type="entry name" value="RIBOSOME BIOGENESIS PROTEIN NSA2 HOMOLOG"/>
    <property type="match status" value="1"/>
</dbReference>
<dbReference type="Pfam" id="PF01201">
    <property type="entry name" value="Ribosomal_S8e"/>
    <property type="match status" value="1"/>
</dbReference>
<evidence type="ECO:0000250" key="1"/>
<evidence type="ECO:0000250" key="2">
    <source>
        <dbReference type="UniProtKB" id="P40078"/>
    </source>
</evidence>
<evidence type="ECO:0000255" key="3">
    <source>
        <dbReference type="PROSITE-ProRule" id="PRU00768"/>
    </source>
</evidence>
<evidence type="ECO:0000256" key="4">
    <source>
        <dbReference type="SAM" id="MobiDB-lite"/>
    </source>
</evidence>
<evidence type="ECO:0000305" key="5"/>